<comment type="function">
    <text evidence="1 2">Participates in the transport of viral genome to neighboring plant cells directly through plasmodesmata, without any budding. TGBp2 and TGBp3 are necessary for intracellular delivery of TGBp1-containing vRNPs to plasmodesmata. Can gate plasmodesmata and increase their size exclusion limit. To a lesser extent than TGB3, induces host actin cytoskeleton network thickening, which probably plays a major role in virus cell-to-cell movement (By similarity). Binds ssRNA in a sequence non-specific manner (PubMed:12093178).</text>
</comment>
<comment type="subunit">
    <text evidence="1 2 3">Interacts with movement protein TGB3 (PubMed:12093178, PubMed:15608333). TGB1-TGB3-TGB2 complex formation is enhanced by ATP hydrolysis (By similarity).</text>
</comment>
<comment type="subcellular location">
    <subcellularLocation>
        <location evidence="7">Host cell junction</location>
        <location evidence="7">Host plasmodesma</location>
    </subcellularLocation>
    <subcellularLocation>
        <location evidence="3 5">Host endoplasmic reticulum membrane</location>
        <topology evidence="4">Multi-pass membrane protein</topology>
    </subcellularLocation>
    <subcellularLocation>
        <location evidence="1">Host cytoplasm</location>
        <location evidence="1">Host cytoskeleton</location>
    </subcellularLocation>
    <subcellularLocation>
        <location evidence="5">Host chloroplast envelope</location>
    </subcellularLocation>
    <text evidence="1 5">Probably localizes to plasmodesmata-associated membrane compartments called peripheral membrane bodies (PMBs). Associates with host actin filaments, possibly for the intracellular transport to the plasmodesmata (By similarity). The viral replication sites are located at the host chloroplast membrane (PubMed:23269927).</text>
</comment>
<comment type="similarity">
    <text evidence="6">Belongs to the virgaviridae/benyvirus TGB2 movement protein family.</text>
</comment>
<organism>
    <name type="scientific">Potato mop-top virus (isolate Potato/Sweden/Sw)</name>
    <name type="common">PMTV</name>
    <dbReference type="NCBI Taxonomy" id="652839"/>
    <lineage>
        <taxon>Viruses</taxon>
        <taxon>Riboviria</taxon>
        <taxon>Orthornavirae</taxon>
        <taxon>Kitrinoviricota</taxon>
        <taxon>Alsuviricetes</taxon>
        <taxon>Martellivirales</taxon>
        <taxon>Virgaviridae</taxon>
        <taxon>Pomovirus</taxon>
        <taxon>Potato mop-top virus</taxon>
    </lineage>
</organism>
<name>TGB2_PMTVS</name>
<proteinExistence type="evidence at protein level"/>
<organismHost>
    <name type="scientific">Solanum nigrum</name>
    <name type="common">Black nightshade</name>
    <dbReference type="NCBI Taxonomy" id="4112"/>
</organismHost>
<organismHost>
    <name type="scientific">Solanum tuberosum</name>
    <name type="common">Potato</name>
    <dbReference type="NCBI Taxonomy" id="4113"/>
</organismHost>
<dbReference type="EMBL" id="AJ277556">
    <property type="protein sequence ID" value="CAB91102.1"/>
    <property type="molecule type" value="Genomic_RNA"/>
</dbReference>
<dbReference type="RefSeq" id="NP_620439.1">
    <property type="nucleotide sequence ID" value="NC_003725.1"/>
</dbReference>
<dbReference type="TCDB" id="9.B.308.6.1">
    <property type="family name" value="the lettuce infectious yellows virus p5 (liyv-p5) family"/>
</dbReference>
<dbReference type="GeneID" id="991175"/>
<dbReference type="KEGG" id="vg:991175"/>
<dbReference type="Proteomes" id="UP000006715">
    <property type="component" value="Genome"/>
</dbReference>
<dbReference type="GO" id="GO:0044167">
    <property type="term" value="C:host cell endoplasmic reticulum membrane"/>
    <property type="evidence" value="ECO:0007669"/>
    <property type="project" value="UniProtKB-SubCell"/>
</dbReference>
<dbReference type="GO" id="GO:0044219">
    <property type="term" value="C:host cell plasmodesma"/>
    <property type="evidence" value="ECO:0007669"/>
    <property type="project" value="UniProtKB-SubCell"/>
</dbReference>
<dbReference type="GO" id="GO:0044163">
    <property type="term" value="C:host cytoskeleton"/>
    <property type="evidence" value="ECO:0007669"/>
    <property type="project" value="UniProtKB-SubCell"/>
</dbReference>
<dbReference type="GO" id="GO:0016020">
    <property type="term" value="C:membrane"/>
    <property type="evidence" value="ECO:0007669"/>
    <property type="project" value="UniProtKB-KW"/>
</dbReference>
<dbReference type="GO" id="GO:0046740">
    <property type="term" value="P:transport of virus in host, cell to cell"/>
    <property type="evidence" value="ECO:0007669"/>
    <property type="project" value="UniProtKB-KW"/>
</dbReference>
<dbReference type="InterPro" id="IPR001896">
    <property type="entry name" value="Plant_vir_prot"/>
</dbReference>
<dbReference type="Pfam" id="PF01307">
    <property type="entry name" value="Plant_vir_prot"/>
    <property type="match status" value="1"/>
</dbReference>
<evidence type="ECO:0000250" key="1">
    <source>
        <dbReference type="UniProtKB" id="P04869"/>
    </source>
</evidence>
<evidence type="ECO:0000269" key="2">
    <source>
    </source>
</evidence>
<evidence type="ECO:0000269" key="3">
    <source>
    </source>
</evidence>
<evidence type="ECO:0000269" key="4">
    <source>
    </source>
</evidence>
<evidence type="ECO:0000269" key="5">
    <source>
    </source>
</evidence>
<evidence type="ECO:0000305" key="6"/>
<evidence type="ECO:0000305" key="7">
    <source>
    </source>
</evidence>
<evidence type="ECO:0000305" key="8">
    <source>
    </source>
</evidence>
<feature type="chain" id="PRO_0000410610" description="Movement protein TGB2">
    <location>
        <begin position="1"/>
        <end position="119"/>
    </location>
</feature>
<feature type="topological domain" description="Cytoplasmic" evidence="8">
    <location>
        <begin position="1"/>
        <end position="13"/>
    </location>
</feature>
<feature type="transmembrane region" description="Helical" evidence="8">
    <location>
        <begin position="14"/>
        <end position="34"/>
    </location>
</feature>
<feature type="topological domain" description="Lumenal" evidence="8">
    <location>
        <begin position="35"/>
        <end position="79"/>
    </location>
</feature>
<feature type="transmembrane region" description="Helical" evidence="8">
    <location>
        <begin position="80"/>
        <end position="100"/>
    </location>
</feature>
<feature type="topological domain" description="Cytoplasmic" evidence="8">
    <location>
        <begin position="101"/>
        <end position="119"/>
    </location>
</feature>
<keyword id="KW-1031">Host cell junction</keyword>
<keyword id="KW-1035">Host cytoplasm</keyword>
<keyword id="KW-1037">Host cytoskeleton</keyword>
<keyword id="KW-1038">Host endoplasmic reticulum</keyword>
<keyword id="KW-1043">Host membrane</keyword>
<keyword id="KW-0472">Membrane</keyword>
<keyword id="KW-1185">Reference proteome</keyword>
<keyword id="KW-0812">Transmembrane</keyword>
<keyword id="KW-1133">Transmembrane helix</keyword>
<keyword id="KW-0813">Transport</keyword>
<keyword id="KW-0916">Viral movement protein</keyword>
<reference key="1">
    <citation type="journal article" date="2003" name="J. Gen. Virol.">
        <title>Potato mop-top virus: the coat protein-encoding RNA and the gene for cysteine-rich protein are dispensable for systemic virus movement in Nicotiana benthamiana.</title>
        <authorList>
            <person name="Savenkov E.I."/>
            <person name="Germundsson A."/>
            <person name="Zamyatnin A.A. Jr."/>
            <person name="Sandgren M."/>
            <person name="Valkonen J.P."/>
        </authorList>
    </citation>
    <scope>NUCLEOTIDE SEQUENCE [GENOMIC RNA]</scope>
</reference>
<reference key="2">
    <citation type="journal article" date="2002" name="Virology">
        <title>Subcellular localisation, protein interactions, and RNA binding of Potato mop-top virus triple gene block proteins.</title>
        <authorList>
            <person name="Cowan G.H."/>
            <person name="Lioliopoulou F."/>
            <person name="Ziegler A."/>
            <person name="Torrance L."/>
        </authorList>
    </citation>
    <scope>RNA-BINDING</scope>
    <scope>INTERACTION WITH TGB3</scope>
    <scope>SUBCELLULAR LOCATION</scope>
</reference>
<reference key="3">
    <citation type="journal article" date="2005" name="Plant Cell">
        <title>Two plant-viral movement proteins traffic in the endocytic recycling pathway.</title>
        <authorList>
            <person name="Haupt S."/>
            <person name="Cowan G.H."/>
            <person name="Ziegler A."/>
            <person name="Roberts A.G."/>
            <person name="Oparka K.J."/>
            <person name="Torrance L."/>
        </authorList>
    </citation>
    <scope>FUNCTION</scope>
    <scope>SUBCELLULAR LOCATION</scope>
    <scope>INTERACTION WITH TGB3</scope>
</reference>
<reference key="4">
    <citation type="journal article" date="2006" name="Plant J.">
        <title>Assessment of the integral membrane protein topology in living cells.</title>
        <authorList>
            <person name="Zamyatnin A.A. Jr."/>
            <person name="Solovyev A.G."/>
            <person name="Bozhkov P.V."/>
            <person name="Valkonen J.P."/>
            <person name="Morozov S.Y."/>
            <person name="Savenkov E.I."/>
        </authorList>
    </citation>
    <scope>TOPOLOGY</scope>
</reference>
<reference key="5">
    <citation type="journal article" date="2012" name="Front. Plant Sci.">
        <title>The potato mop-top virus TGB2 protein and viral RNA associate with chloroplasts and viral infection induces inclusions in the plastids.</title>
        <authorList>
            <person name="Cowan G.H."/>
            <person name="Roberts A.G."/>
            <person name="Chapman S.N."/>
            <person name="Ziegler A."/>
            <person name="Savenkov E.I."/>
            <person name="Torrance L."/>
        </authorList>
    </citation>
    <scope>SUBCELLULAR LOCATION</scope>
</reference>
<protein>
    <recommendedName>
        <fullName>Movement protein TGB2</fullName>
    </recommendedName>
    <alternativeName>
        <fullName>P14</fullName>
    </alternativeName>
    <alternativeName>
        <fullName>Triple gene block 2 protein</fullName>
        <shortName>TGBp2</shortName>
    </alternativeName>
</protein>
<sequence>MVRNNEIGARPNKYWPVVAAVVAICLFGFLTVTNQKHATQSGDNIHKFANGGQYRDGSKSIKYNCNNPRAYNGSSSNITFSQLFLPVLLIGAALYAYLWFTRPDCSVTCRGDCCRSYGG</sequence>
<accession>Q9IV53</accession>